<organism>
    <name type="scientific">Actinobacillus pleuropneumoniae serotype 3 (strain JL03)</name>
    <dbReference type="NCBI Taxonomy" id="434271"/>
    <lineage>
        <taxon>Bacteria</taxon>
        <taxon>Pseudomonadati</taxon>
        <taxon>Pseudomonadota</taxon>
        <taxon>Gammaproteobacteria</taxon>
        <taxon>Pasteurellales</taxon>
        <taxon>Pasteurellaceae</taxon>
        <taxon>Actinobacillus</taxon>
    </lineage>
</organism>
<gene>
    <name evidence="1" type="primary">ung</name>
    <name type="ordered locus">APJL_0380</name>
</gene>
<name>UNG_ACTPJ</name>
<protein>
    <recommendedName>
        <fullName evidence="1">Uracil-DNA glycosylase</fullName>
        <shortName evidence="1">UDG</shortName>
        <ecNumber evidence="1">3.2.2.27</ecNumber>
    </recommendedName>
</protein>
<keyword id="KW-0963">Cytoplasm</keyword>
<keyword id="KW-0227">DNA damage</keyword>
<keyword id="KW-0234">DNA repair</keyword>
<keyword id="KW-0378">Hydrolase</keyword>
<dbReference type="EC" id="3.2.2.27" evidence="1"/>
<dbReference type="EMBL" id="CP000687">
    <property type="protein sequence ID" value="ABY68971.1"/>
    <property type="molecule type" value="Genomic_DNA"/>
</dbReference>
<dbReference type="RefSeq" id="WP_005596359.1">
    <property type="nucleotide sequence ID" value="NC_010278.1"/>
</dbReference>
<dbReference type="SMR" id="B0BTB4"/>
<dbReference type="GeneID" id="48598528"/>
<dbReference type="KEGG" id="apj:APJL_0380"/>
<dbReference type="HOGENOM" id="CLU_032162_3_0_6"/>
<dbReference type="Proteomes" id="UP000008547">
    <property type="component" value="Chromosome"/>
</dbReference>
<dbReference type="GO" id="GO:0005737">
    <property type="term" value="C:cytoplasm"/>
    <property type="evidence" value="ECO:0007669"/>
    <property type="project" value="UniProtKB-SubCell"/>
</dbReference>
<dbReference type="GO" id="GO:0004844">
    <property type="term" value="F:uracil DNA N-glycosylase activity"/>
    <property type="evidence" value="ECO:0007669"/>
    <property type="project" value="UniProtKB-UniRule"/>
</dbReference>
<dbReference type="GO" id="GO:0097510">
    <property type="term" value="P:base-excision repair, AP site formation via deaminated base removal"/>
    <property type="evidence" value="ECO:0007669"/>
    <property type="project" value="TreeGrafter"/>
</dbReference>
<dbReference type="CDD" id="cd10027">
    <property type="entry name" value="UDG-F1-like"/>
    <property type="match status" value="1"/>
</dbReference>
<dbReference type="FunFam" id="3.40.470.10:FF:000001">
    <property type="entry name" value="Uracil-DNA glycosylase"/>
    <property type="match status" value="1"/>
</dbReference>
<dbReference type="Gene3D" id="3.40.470.10">
    <property type="entry name" value="Uracil-DNA glycosylase-like domain"/>
    <property type="match status" value="1"/>
</dbReference>
<dbReference type="HAMAP" id="MF_00148">
    <property type="entry name" value="UDG"/>
    <property type="match status" value="1"/>
</dbReference>
<dbReference type="InterPro" id="IPR002043">
    <property type="entry name" value="UDG_fam1"/>
</dbReference>
<dbReference type="InterPro" id="IPR018085">
    <property type="entry name" value="Ura-DNA_Glyclase_AS"/>
</dbReference>
<dbReference type="InterPro" id="IPR005122">
    <property type="entry name" value="Uracil-DNA_glycosylase-like"/>
</dbReference>
<dbReference type="InterPro" id="IPR036895">
    <property type="entry name" value="Uracil-DNA_glycosylase-like_sf"/>
</dbReference>
<dbReference type="NCBIfam" id="NF003588">
    <property type="entry name" value="PRK05254.1-1"/>
    <property type="match status" value="1"/>
</dbReference>
<dbReference type="NCBIfam" id="NF003589">
    <property type="entry name" value="PRK05254.1-2"/>
    <property type="match status" value="1"/>
</dbReference>
<dbReference type="NCBIfam" id="NF003591">
    <property type="entry name" value="PRK05254.1-4"/>
    <property type="match status" value="1"/>
</dbReference>
<dbReference type="NCBIfam" id="NF003592">
    <property type="entry name" value="PRK05254.1-5"/>
    <property type="match status" value="1"/>
</dbReference>
<dbReference type="NCBIfam" id="TIGR00628">
    <property type="entry name" value="ung"/>
    <property type="match status" value="1"/>
</dbReference>
<dbReference type="PANTHER" id="PTHR11264">
    <property type="entry name" value="URACIL-DNA GLYCOSYLASE"/>
    <property type="match status" value="1"/>
</dbReference>
<dbReference type="PANTHER" id="PTHR11264:SF0">
    <property type="entry name" value="URACIL-DNA GLYCOSYLASE"/>
    <property type="match status" value="1"/>
</dbReference>
<dbReference type="Pfam" id="PF03167">
    <property type="entry name" value="UDG"/>
    <property type="match status" value="1"/>
</dbReference>
<dbReference type="SMART" id="SM00986">
    <property type="entry name" value="UDG"/>
    <property type="match status" value="1"/>
</dbReference>
<dbReference type="SMART" id="SM00987">
    <property type="entry name" value="UreE_C"/>
    <property type="match status" value="1"/>
</dbReference>
<dbReference type="SUPFAM" id="SSF52141">
    <property type="entry name" value="Uracil-DNA glycosylase-like"/>
    <property type="match status" value="1"/>
</dbReference>
<dbReference type="PROSITE" id="PS00130">
    <property type="entry name" value="U_DNA_GLYCOSYLASE"/>
    <property type="match status" value="1"/>
</dbReference>
<accession>B0BTB4</accession>
<feature type="chain" id="PRO_1000096561" description="Uracil-DNA glycosylase">
    <location>
        <begin position="1"/>
        <end position="225"/>
    </location>
</feature>
<feature type="active site" description="Proton acceptor" evidence="1">
    <location>
        <position position="61"/>
    </location>
</feature>
<reference key="1">
    <citation type="journal article" date="2008" name="PLoS ONE">
        <title>Genome biology of Actinobacillus pleuropneumoniae JL03, an isolate of serotype 3 prevalent in China.</title>
        <authorList>
            <person name="Xu Z."/>
            <person name="Zhou Y."/>
            <person name="Li L."/>
            <person name="Zhou R."/>
            <person name="Xiao S."/>
            <person name="Wan Y."/>
            <person name="Zhang S."/>
            <person name="Wang K."/>
            <person name="Li W."/>
            <person name="Li L."/>
            <person name="Jin H."/>
            <person name="Kang M."/>
            <person name="Dalai B."/>
            <person name="Li T."/>
            <person name="Liu L."/>
            <person name="Cheng Y."/>
            <person name="Zhang L."/>
            <person name="Xu T."/>
            <person name="Zheng H."/>
            <person name="Pu S."/>
            <person name="Wang B."/>
            <person name="Gu W."/>
            <person name="Zhang X.L."/>
            <person name="Zhu G.-F."/>
            <person name="Wang S."/>
            <person name="Zhao G.-P."/>
            <person name="Chen H."/>
        </authorList>
    </citation>
    <scope>NUCLEOTIDE SEQUENCE [LARGE SCALE GENOMIC DNA]</scope>
    <source>
        <strain>JL03</strain>
    </source>
</reference>
<proteinExistence type="inferred from homology"/>
<sequence>MNNWTEALGEEKQQPYFQHILQQVHQERMNGVTVFPPQKEVFSAFALTEFKDVKVVILGQDPYHGPNQAHGLAFSVKPPVAPPPSLVNMYKELAQDVEGFQIPNHGYLVDWAKQGVLLLNTVLTVRQGQAHSHANFGWEIFTDKVIAQLNQHRENLVFLLWGSHAQKKGQFIDRSRHCVLTAPHPSPLSAYRGFFGCKHFSKTNRYLLSKGIAPINWQLRLEIDY</sequence>
<evidence type="ECO:0000255" key="1">
    <source>
        <dbReference type="HAMAP-Rule" id="MF_00148"/>
    </source>
</evidence>
<comment type="function">
    <text evidence="1">Excises uracil residues from the DNA which can arise as a result of misincorporation of dUMP residues by DNA polymerase or due to deamination of cytosine.</text>
</comment>
<comment type="catalytic activity">
    <reaction evidence="1">
        <text>Hydrolyzes single-stranded DNA or mismatched double-stranded DNA and polynucleotides, releasing free uracil.</text>
        <dbReference type="EC" id="3.2.2.27"/>
    </reaction>
</comment>
<comment type="subcellular location">
    <subcellularLocation>
        <location evidence="1">Cytoplasm</location>
    </subcellularLocation>
</comment>
<comment type="similarity">
    <text evidence="1">Belongs to the uracil-DNA glycosylase (UDG) superfamily. UNG family.</text>
</comment>